<keyword id="KW-0687">Ribonucleoprotein</keyword>
<keyword id="KW-0689">Ribosomal protein</keyword>
<keyword id="KW-0694">RNA-binding</keyword>
<keyword id="KW-0699">rRNA-binding</keyword>
<organism>
    <name type="scientific">Salmonella heidelberg (strain SL476)</name>
    <dbReference type="NCBI Taxonomy" id="454169"/>
    <lineage>
        <taxon>Bacteria</taxon>
        <taxon>Pseudomonadati</taxon>
        <taxon>Pseudomonadota</taxon>
        <taxon>Gammaproteobacteria</taxon>
        <taxon>Enterobacterales</taxon>
        <taxon>Enterobacteriaceae</taxon>
        <taxon>Salmonella</taxon>
    </lineage>
</organism>
<name>RS11_SALHS</name>
<protein>
    <recommendedName>
        <fullName evidence="1">Small ribosomal subunit protein uS11</fullName>
    </recommendedName>
    <alternativeName>
        <fullName evidence="2">30S ribosomal protein S11</fullName>
    </alternativeName>
</protein>
<reference key="1">
    <citation type="journal article" date="2011" name="J. Bacteriol.">
        <title>Comparative genomics of 28 Salmonella enterica isolates: evidence for CRISPR-mediated adaptive sublineage evolution.</title>
        <authorList>
            <person name="Fricke W.F."/>
            <person name="Mammel M.K."/>
            <person name="McDermott P.F."/>
            <person name="Tartera C."/>
            <person name="White D.G."/>
            <person name="Leclerc J.E."/>
            <person name="Ravel J."/>
            <person name="Cebula T.A."/>
        </authorList>
    </citation>
    <scope>NUCLEOTIDE SEQUENCE [LARGE SCALE GENOMIC DNA]</scope>
    <source>
        <strain>SL476</strain>
    </source>
</reference>
<dbReference type="EMBL" id="CP001120">
    <property type="protein sequence ID" value="ACF67276.1"/>
    <property type="molecule type" value="Genomic_DNA"/>
</dbReference>
<dbReference type="RefSeq" id="WP_001029758.1">
    <property type="nucleotide sequence ID" value="NC_011083.1"/>
</dbReference>
<dbReference type="SMR" id="B4TJY7"/>
<dbReference type="GeneID" id="98390419"/>
<dbReference type="KEGG" id="seh:SeHA_C3720"/>
<dbReference type="HOGENOM" id="CLU_072439_5_0_6"/>
<dbReference type="Proteomes" id="UP000001866">
    <property type="component" value="Chromosome"/>
</dbReference>
<dbReference type="GO" id="GO:1990904">
    <property type="term" value="C:ribonucleoprotein complex"/>
    <property type="evidence" value="ECO:0007669"/>
    <property type="project" value="UniProtKB-KW"/>
</dbReference>
<dbReference type="GO" id="GO:0005840">
    <property type="term" value="C:ribosome"/>
    <property type="evidence" value="ECO:0007669"/>
    <property type="project" value="UniProtKB-KW"/>
</dbReference>
<dbReference type="GO" id="GO:0019843">
    <property type="term" value="F:rRNA binding"/>
    <property type="evidence" value="ECO:0007669"/>
    <property type="project" value="UniProtKB-UniRule"/>
</dbReference>
<dbReference type="GO" id="GO:0003735">
    <property type="term" value="F:structural constituent of ribosome"/>
    <property type="evidence" value="ECO:0007669"/>
    <property type="project" value="InterPro"/>
</dbReference>
<dbReference type="GO" id="GO:0006412">
    <property type="term" value="P:translation"/>
    <property type="evidence" value="ECO:0007669"/>
    <property type="project" value="UniProtKB-UniRule"/>
</dbReference>
<dbReference type="FunFam" id="3.30.420.80:FF:000001">
    <property type="entry name" value="30S ribosomal protein S11"/>
    <property type="match status" value="1"/>
</dbReference>
<dbReference type="Gene3D" id="3.30.420.80">
    <property type="entry name" value="Ribosomal protein S11"/>
    <property type="match status" value="1"/>
</dbReference>
<dbReference type="HAMAP" id="MF_01310">
    <property type="entry name" value="Ribosomal_uS11"/>
    <property type="match status" value="1"/>
</dbReference>
<dbReference type="InterPro" id="IPR001971">
    <property type="entry name" value="Ribosomal_uS11"/>
</dbReference>
<dbReference type="InterPro" id="IPR019981">
    <property type="entry name" value="Ribosomal_uS11_bac-type"/>
</dbReference>
<dbReference type="InterPro" id="IPR018102">
    <property type="entry name" value="Ribosomal_uS11_CS"/>
</dbReference>
<dbReference type="InterPro" id="IPR036967">
    <property type="entry name" value="Ribosomal_uS11_sf"/>
</dbReference>
<dbReference type="NCBIfam" id="NF003698">
    <property type="entry name" value="PRK05309.1"/>
    <property type="match status" value="1"/>
</dbReference>
<dbReference type="NCBIfam" id="TIGR03632">
    <property type="entry name" value="uS11_bact"/>
    <property type="match status" value="1"/>
</dbReference>
<dbReference type="PANTHER" id="PTHR11759">
    <property type="entry name" value="40S RIBOSOMAL PROTEIN S14/30S RIBOSOMAL PROTEIN S11"/>
    <property type="match status" value="1"/>
</dbReference>
<dbReference type="Pfam" id="PF00411">
    <property type="entry name" value="Ribosomal_S11"/>
    <property type="match status" value="1"/>
</dbReference>
<dbReference type="PIRSF" id="PIRSF002131">
    <property type="entry name" value="Ribosomal_S11"/>
    <property type="match status" value="1"/>
</dbReference>
<dbReference type="SUPFAM" id="SSF53137">
    <property type="entry name" value="Translational machinery components"/>
    <property type="match status" value="1"/>
</dbReference>
<dbReference type="PROSITE" id="PS00054">
    <property type="entry name" value="RIBOSOMAL_S11"/>
    <property type="match status" value="1"/>
</dbReference>
<proteinExistence type="inferred from homology"/>
<evidence type="ECO:0000255" key="1">
    <source>
        <dbReference type="HAMAP-Rule" id="MF_01310"/>
    </source>
</evidence>
<evidence type="ECO:0000305" key="2"/>
<comment type="function">
    <text evidence="1">Located on the platform of the 30S subunit, it bridges several disparate RNA helices of the 16S rRNA. Forms part of the Shine-Dalgarno cleft in the 70S ribosome.</text>
</comment>
<comment type="subunit">
    <text evidence="1">Part of the 30S ribosomal subunit. Interacts with proteins S7 and S18. Binds to IF-3.</text>
</comment>
<comment type="similarity">
    <text evidence="1">Belongs to the universal ribosomal protein uS11 family.</text>
</comment>
<gene>
    <name evidence="1" type="primary">rpsK</name>
    <name type="ordered locus">SeHA_C3720</name>
</gene>
<feature type="chain" id="PRO_1000141136" description="Small ribosomal subunit protein uS11">
    <location>
        <begin position="1"/>
        <end position="129"/>
    </location>
</feature>
<sequence length="129" mass="13831">MAKAPVRARKRVRKQVSDGVAHIHASFNNTIVTITDRQGNALGWATAGGSGFRGSRKSTPFAAQVAAERCADAVKEYGIKNLEVMVKGPGPGRESTIRALNAAGFRITNITDVTPIPHNGCRPPKKRRV</sequence>
<accession>B4TJY7</accession>